<organism>
    <name type="scientific">Rickettsia prowazekii (strain Madrid E)</name>
    <dbReference type="NCBI Taxonomy" id="272947"/>
    <lineage>
        <taxon>Bacteria</taxon>
        <taxon>Pseudomonadati</taxon>
        <taxon>Pseudomonadota</taxon>
        <taxon>Alphaproteobacteria</taxon>
        <taxon>Rickettsiales</taxon>
        <taxon>Rickettsiaceae</taxon>
        <taxon>Rickettsieae</taxon>
        <taxon>Rickettsia</taxon>
        <taxon>typhus group</taxon>
    </lineage>
</organism>
<gene>
    <name type="primary">rpsS</name>
    <name type="ordered locus">RP655</name>
</gene>
<keyword id="KW-1185">Reference proteome</keyword>
<keyword id="KW-0687">Ribonucleoprotein</keyword>
<keyword id="KW-0689">Ribosomal protein</keyword>
<keyword id="KW-0694">RNA-binding</keyword>
<keyword id="KW-0699">rRNA-binding</keyword>
<proteinExistence type="inferred from homology"/>
<accession>Q9ZCQ9</accession>
<protein>
    <recommendedName>
        <fullName evidence="2">Small ribosomal subunit protein uS19</fullName>
    </recommendedName>
    <alternativeName>
        <fullName>30S ribosomal protein S19</fullName>
    </alternativeName>
</protein>
<dbReference type="EMBL" id="AJ235272">
    <property type="protein sequence ID" value="CAA15095.1"/>
    <property type="molecule type" value="Genomic_DNA"/>
</dbReference>
<dbReference type="PIR" id="E71671">
    <property type="entry name" value="E71671"/>
</dbReference>
<dbReference type="RefSeq" id="NP_221019.1">
    <property type="nucleotide sequence ID" value="NC_000963.1"/>
</dbReference>
<dbReference type="RefSeq" id="WP_004596203.1">
    <property type="nucleotide sequence ID" value="NC_000963.1"/>
</dbReference>
<dbReference type="SMR" id="Q9ZCQ9"/>
<dbReference type="STRING" id="272947.gene:17555732"/>
<dbReference type="EnsemblBacteria" id="CAA15095">
    <property type="protein sequence ID" value="CAA15095"/>
    <property type="gene ID" value="CAA15095"/>
</dbReference>
<dbReference type="GeneID" id="57569780"/>
<dbReference type="KEGG" id="rpr:RP655"/>
<dbReference type="PATRIC" id="fig|272947.5.peg.677"/>
<dbReference type="eggNOG" id="COG0185">
    <property type="taxonomic scope" value="Bacteria"/>
</dbReference>
<dbReference type="HOGENOM" id="CLU_144911_0_1_5"/>
<dbReference type="OrthoDB" id="9797833at2"/>
<dbReference type="Proteomes" id="UP000002480">
    <property type="component" value="Chromosome"/>
</dbReference>
<dbReference type="GO" id="GO:0005737">
    <property type="term" value="C:cytoplasm"/>
    <property type="evidence" value="ECO:0007669"/>
    <property type="project" value="UniProtKB-ARBA"/>
</dbReference>
<dbReference type="GO" id="GO:0015935">
    <property type="term" value="C:small ribosomal subunit"/>
    <property type="evidence" value="ECO:0007669"/>
    <property type="project" value="InterPro"/>
</dbReference>
<dbReference type="GO" id="GO:0019843">
    <property type="term" value="F:rRNA binding"/>
    <property type="evidence" value="ECO:0007669"/>
    <property type="project" value="UniProtKB-UniRule"/>
</dbReference>
<dbReference type="GO" id="GO:0003735">
    <property type="term" value="F:structural constituent of ribosome"/>
    <property type="evidence" value="ECO:0007669"/>
    <property type="project" value="InterPro"/>
</dbReference>
<dbReference type="GO" id="GO:0000028">
    <property type="term" value="P:ribosomal small subunit assembly"/>
    <property type="evidence" value="ECO:0007669"/>
    <property type="project" value="TreeGrafter"/>
</dbReference>
<dbReference type="GO" id="GO:0006412">
    <property type="term" value="P:translation"/>
    <property type="evidence" value="ECO:0007669"/>
    <property type="project" value="UniProtKB-UniRule"/>
</dbReference>
<dbReference type="FunFam" id="3.30.860.10:FF:000001">
    <property type="entry name" value="30S ribosomal protein S19"/>
    <property type="match status" value="1"/>
</dbReference>
<dbReference type="Gene3D" id="3.30.860.10">
    <property type="entry name" value="30s Ribosomal Protein S19, Chain A"/>
    <property type="match status" value="1"/>
</dbReference>
<dbReference type="HAMAP" id="MF_00531">
    <property type="entry name" value="Ribosomal_uS19"/>
    <property type="match status" value="1"/>
</dbReference>
<dbReference type="InterPro" id="IPR002222">
    <property type="entry name" value="Ribosomal_uS19"/>
</dbReference>
<dbReference type="InterPro" id="IPR005732">
    <property type="entry name" value="Ribosomal_uS19_bac-type"/>
</dbReference>
<dbReference type="InterPro" id="IPR020934">
    <property type="entry name" value="Ribosomal_uS19_CS"/>
</dbReference>
<dbReference type="InterPro" id="IPR023575">
    <property type="entry name" value="Ribosomal_uS19_SF"/>
</dbReference>
<dbReference type="NCBIfam" id="TIGR01050">
    <property type="entry name" value="rpsS_bact"/>
    <property type="match status" value="1"/>
</dbReference>
<dbReference type="PANTHER" id="PTHR11880">
    <property type="entry name" value="RIBOSOMAL PROTEIN S19P FAMILY MEMBER"/>
    <property type="match status" value="1"/>
</dbReference>
<dbReference type="PANTHER" id="PTHR11880:SF8">
    <property type="entry name" value="SMALL RIBOSOMAL SUBUNIT PROTEIN US19M"/>
    <property type="match status" value="1"/>
</dbReference>
<dbReference type="Pfam" id="PF00203">
    <property type="entry name" value="Ribosomal_S19"/>
    <property type="match status" value="1"/>
</dbReference>
<dbReference type="PIRSF" id="PIRSF002144">
    <property type="entry name" value="Ribosomal_S19"/>
    <property type="match status" value="1"/>
</dbReference>
<dbReference type="PRINTS" id="PR00975">
    <property type="entry name" value="RIBOSOMALS19"/>
</dbReference>
<dbReference type="SUPFAM" id="SSF54570">
    <property type="entry name" value="Ribosomal protein S19"/>
    <property type="match status" value="1"/>
</dbReference>
<dbReference type="PROSITE" id="PS00323">
    <property type="entry name" value="RIBOSOMAL_S19"/>
    <property type="match status" value="1"/>
</dbReference>
<sequence>MARSIWKGPFVDGYLIKKVQKLMKSGKSEMIKTWSRRSTILPIFVGFTFSVHNGNKFIPVYINEEMVGRKLGEFAPTRTFHGHGADKKVKRK</sequence>
<name>RS19_RICPR</name>
<reference key="1">
    <citation type="journal article" date="1998" name="Nature">
        <title>The genome sequence of Rickettsia prowazekii and the origin of mitochondria.</title>
        <authorList>
            <person name="Andersson S.G.E."/>
            <person name="Zomorodipour A."/>
            <person name="Andersson J.O."/>
            <person name="Sicheritz-Ponten T."/>
            <person name="Alsmark U.C.M."/>
            <person name="Podowski R.M."/>
            <person name="Naeslund A.K."/>
            <person name="Eriksson A.-S."/>
            <person name="Winkler H.H."/>
            <person name="Kurland C.G."/>
        </authorList>
    </citation>
    <scope>NUCLEOTIDE SEQUENCE [LARGE SCALE GENOMIC DNA]</scope>
    <source>
        <strain>Madrid E</strain>
    </source>
</reference>
<comment type="function">
    <text evidence="1">Protein S19 forms a complex with S13 that binds strongly to the 16S ribosomal RNA.</text>
</comment>
<comment type="similarity">
    <text evidence="2">Belongs to the universal ribosomal protein uS19 family.</text>
</comment>
<evidence type="ECO:0000250" key="1"/>
<evidence type="ECO:0000305" key="2"/>
<feature type="chain" id="PRO_0000129892" description="Small ribosomal subunit protein uS19">
    <location>
        <begin position="1"/>
        <end position="92"/>
    </location>
</feature>